<reference key="1">
    <citation type="submission" date="2006-01" db="EMBL/GenBank/DDBJ databases">
        <title>Complete sequence of Rhodopseudomonas palustris HaA2.</title>
        <authorList>
            <consortium name="US DOE Joint Genome Institute"/>
            <person name="Copeland A."/>
            <person name="Lucas S."/>
            <person name="Lapidus A."/>
            <person name="Barry K."/>
            <person name="Detter J.C."/>
            <person name="Glavina T."/>
            <person name="Hammon N."/>
            <person name="Israni S."/>
            <person name="Pitluck S."/>
            <person name="Chain P."/>
            <person name="Malfatti S."/>
            <person name="Shin M."/>
            <person name="Vergez L."/>
            <person name="Schmutz J."/>
            <person name="Larimer F."/>
            <person name="Land M."/>
            <person name="Hauser L."/>
            <person name="Pelletier D.A."/>
            <person name="Kyrpides N."/>
            <person name="Anderson I."/>
            <person name="Oda Y."/>
            <person name="Harwood C.S."/>
            <person name="Richardson P."/>
        </authorList>
    </citation>
    <scope>NUCLEOTIDE SEQUENCE [LARGE SCALE GENOMIC DNA]</scope>
    <source>
        <strain>HaA2</strain>
    </source>
</reference>
<protein>
    <recommendedName>
        <fullName evidence="1">Small ribosomal subunit protein uS10</fullName>
    </recommendedName>
    <alternativeName>
        <fullName evidence="2">30S ribosomal protein S10</fullName>
    </alternativeName>
</protein>
<evidence type="ECO:0000255" key="1">
    <source>
        <dbReference type="HAMAP-Rule" id="MF_00508"/>
    </source>
</evidence>
<evidence type="ECO:0000305" key="2"/>
<keyword id="KW-1185">Reference proteome</keyword>
<keyword id="KW-0687">Ribonucleoprotein</keyword>
<keyword id="KW-0689">Ribosomal protein</keyword>
<organism>
    <name type="scientific">Rhodopseudomonas palustris (strain HaA2)</name>
    <dbReference type="NCBI Taxonomy" id="316058"/>
    <lineage>
        <taxon>Bacteria</taxon>
        <taxon>Pseudomonadati</taxon>
        <taxon>Pseudomonadota</taxon>
        <taxon>Alphaproteobacteria</taxon>
        <taxon>Hyphomicrobiales</taxon>
        <taxon>Nitrobacteraceae</taxon>
        <taxon>Rhodopseudomonas</taxon>
    </lineage>
</organism>
<name>RS10_RHOP2</name>
<proteinExistence type="inferred from homology"/>
<accession>Q2IXR1</accession>
<sequence length="102" mass="11669">MNGQNIRIRLKAFDHRILDTSTREIVNTAKRTGAQVRGPIPLPTRIEKFTVNRSPHVDKKSREQFEMRTHKRLLDIVDPTPQTVDALMKLDLAAGVDVEIKL</sequence>
<gene>
    <name evidence="1" type="primary">rpsJ</name>
    <name type="ordered locus">RPB_2294</name>
</gene>
<dbReference type="EMBL" id="CP000250">
    <property type="protein sequence ID" value="ABD06999.1"/>
    <property type="molecule type" value="Genomic_DNA"/>
</dbReference>
<dbReference type="RefSeq" id="WP_002712302.1">
    <property type="nucleotide sequence ID" value="NC_007778.1"/>
</dbReference>
<dbReference type="SMR" id="Q2IXR1"/>
<dbReference type="STRING" id="316058.RPB_2294"/>
<dbReference type="GeneID" id="93215325"/>
<dbReference type="KEGG" id="rpb:RPB_2294"/>
<dbReference type="eggNOG" id="COG0051">
    <property type="taxonomic scope" value="Bacteria"/>
</dbReference>
<dbReference type="HOGENOM" id="CLU_122625_1_3_5"/>
<dbReference type="OrthoDB" id="9804464at2"/>
<dbReference type="Proteomes" id="UP000008809">
    <property type="component" value="Chromosome"/>
</dbReference>
<dbReference type="GO" id="GO:1990904">
    <property type="term" value="C:ribonucleoprotein complex"/>
    <property type="evidence" value="ECO:0007669"/>
    <property type="project" value="UniProtKB-KW"/>
</dbReference>
<dbReference type="GO" id="GO:0005840">
    <property type="term" value="C:ribosome"/>
    <property type="evidence" value="ECO:0007669"/>
    <property type="project" value="UniProtKB-KW"/>
</dbReference>
<dbReference type="GO" id="GO:0003735">
    <property type="term" value="F:structural constituent of ribosome"/>
    <property type="evidence" value="ECO:0007669"/>
    <property type="project" value="InterPro"/>
</dbReference>
<dbReference type="GO" id="GO:0000049">
    <property type="term" value="F:tRNA binding"/>
    <property type="evidence" value="ECO:0007669"/>
    <property type="project" value="UniProtKB-UniRule"/>
</dbReference>
<dbReference type="GO" id="GO:0006412">
    <property type="term" value="P:translation"/>
    <property type="evidence" value="ECO:0007669"/>
    <property type="project" value="UniProtKB-UniRule"/>
</dbReference>
<dbReference type="FunFam" id="3.30.70.600:FF:000001">
    <property type="entry name" value="30S ribosomal protein S10"/>
    <property type="match status" value="1"/>
</dbReference>
<dbReference type="Gene3D" id="3.30.70.600">
    <property type="entry name" value="Ribosomal protein S10 domain"/>
    <property type="match status" value="1"/>
</dbReference>
<dbReference type="HAMAP" id="MF_00508">
    <property type="entry name" value="Ribosomal_uS10"/>
    <property type="match status" value="1"/>
</dbReference>
<dbReference type="InterPro" id="IPR001848">
    <property type="entry name" value="Ribosomal_uS10"/>
</dbReference>
<dbReference type="InterPro" id="IPR018268">
    <property type="entry name" value="Ribosomal_uS10_CS"/>
</dbReference>
<dbReference type="InterPro" id="IPR027486">
    <property type="entry name" value="Ribosomal_uS10_dom"/>
</dbReference>
<dbReference type="InterPro" id="IPR036838">
    <property type="entry name" value="Ribosomal_uS10_dom_sf"/>
</dbReference>
<dbReference type="NCBIfam" id="NF001861">
    <property type="entry name" value="PRK00596.1"/>
    <property type="match status" value="1"/>
</dbReference>
<dbReference type="NCBIfam" id="TIGR01049">
    <property type="entry name" value="rpsJ_bact"/>
    <property type="match status" value="1"/>
</dbReference>
<dbReference type="PANTHER" id="PTHR11700">
    <property type="entry name" value="30S RIBOSOMAL PROTEIN S10 FAMILY MEMBER"/>
    <property type="match status" value="1"/>
</dbReference>
<dbReference type="Pfam" id="PF00338">
    <property type="entry name" value="Ribosomal_S10"/>
    <property type="match status" value="1"/>
</dbReference>
<dbReference type="PRINTS" id="PR00971">
    <property type="entry name" value="RIBOSOMALS10"/>
</dbReference>
<dbReference type="SMART" id="SM01403">
    <property type="entry name" value="Ribosomal_S10"/>
    <property type="match status" value="1"/>
</dbReference>
<dbReference type="SUPFAM" id="SSF54999">
    <property type="entry name" value="Ribosomal protein S10"/>
    <property type="match status" value="1"/>
</dbReference>
<dbReference type="PROSITE" id="PS00361">
    <property type="entry name" value="RIBOSOMAL_S10"/>
    <property type="match status" value="1"/>
</dbReference>
<comment type="function">
    <text evidence="1">Involved in the binding of tRNA to the ribosomes.</text>
</comment>
<comment type="subunit">
    <text evidence="1">Part of the 30S ribosomal subunit.</text>
</comment>
<comment type="similarity">
    <text evidence="1">Belongs to the universal ribosomal protein uS10 family.</text>
</comment>
<feature type="chain" id="PRO_0000258568" description="Small ribosomal subunit protein uS10">
    <location>
        <begin position="1"/>
        <end position="102"/>
    </location>
</feature>